<keyword id="KW-0031">Aminopeptidase</keyword>
<keyword id="KW-1015">Disulfide bond</keyword>
<keyword id="KW-0325">Glycoprotein</keyword>
<keyword id="KW-0378">Hydrolase</keyword>
<keyword id="KW-0479">Metal-binding</keyword>
<keyword id="KW-0645">Protease</keyword>
<keyword id="KW-1185">Reference proteome</keyword>
<keyword id="KW-0964">Secreted</keyword>
<keyword id="KW-0732">Signal</keyword>
<keyword id="KW-0862">Zinc</keyword>
<keyword id="KW-0865">Zymogen</keyword>
<evidence type="ECO:0000250" key="1"/>
<evidence type="ECO:0000255" key="2"/>
<evidence type="ECO:0000305" key="3"/>
<organism>
    <name type="scientific">Ajellomyces capsulatus (strain G186AR / H82 / ATCC MYA-2454 / RMSCC 2432)</name>
    <name type="common">Darling's disease fungus</name>
    <name type="synonym">Histoplasma capsulatum</name>
    <dbReference type="NCBI Taxonomy" id="447093"/>
    <lineage>
        <taxon>Eukaryota</taxon>
        <taxon>Fungi</taxon>
        <taxon>Dikarya</taxon>
        <taxon>Ascomycota</taxon>
        <taxon>Pezizomycotina</taxon>
        <taxon>Eurotiomycetes</taxon>
        <taxon>Eurotiomycetidae</taxon>
        <taxon>Onygenales</taxon>
        <taxon>Ajellomycetaceae</taxon>
        <taxon>Histoplasma</taxon>
    </lineage>
</organism>
<reference key="1">
    <citation type="submission" date="2009-02" db="EMBL/GenBank/DDBJ databases">
        <title>The genome sequence of Ajellomyces capsulatus strain G186AR.</title>
        <authorList>
            <person name="Champion M."/>
            <person name="Cuomo C.A."/>
            <person name="Ma L.-J."/>
            <person name="Henn M.R."/>
            <person name="Sil A."/>
            <person name="Goldman B."/>
            <person name="Young S.K."/>
            <person name="Kodira C.D."/>
            <person name="Zeng Q."/>
            <person name="Koehrsen M."/>
            <person name="Alvarado L."/>
            <person name="Berlin A."/>
            <person name="Borenstein D."/>
            <person name="Chen Z."/>
            <person name="Engels R."/>
            <person name="Freedman E."/>
            <person name="Gellesch M."/>
            <person name="Goldberg J."/>
            <person name="Griggs A."/>
            <person name="Gujja S."/>
            <person name="Heiman D."/>
            <person name="Hepburn T."/>
            <person name="Howarth C."/>
            <person name="Jen D."/>
            <person name="Larson L."/>
            <person name="Lewis B."/>
            <person name="Mehta T."/>
            <person name="Park D."/>
            <person name="Pearson M."/>
            <person name="Roberts A."/>
            <person name="Saif S."/>
            <person name="Shea T."/>
            <person name="Shenoy N."/>
            <person name="Sisk P."/>
            <person name="Stolte C."/>
            <person name="Sykes S."/>
            <person name="Walk T."/>
            <person name="White J."/>
            <person name="Yandava C."/>
            <person name="Klein B."/>
            <person name="McEwen J.G."/>
            <person name="Puccia R."/>
            <person name="Goldman G.H."/>
            <person name="Felipe M.S."/>
            <person name="Nino-Vega G."/>
            <person name="San-Blas G."/>
            <person name="Taylor J."/>
            <person name="Mendoza L."/>
            <person name="Galagan J.E."/>
            <person name="Nusbaum C."/>
            <person name="Birren B.W."/>
        </authorList>
    </citation>
    <scope>NUCLEOTIDE SEQUENCE [LARGE SCALE GENOMIC DNA]</scope>
    <source>
        <strain>G186AR / H82 / ATCC MYA-2454 / RMSCC 2432</strain>
    </source>
</reference>
<gene>
    <name type="primary">LAP1</name>
    <name type="ORF">HCBG_07202</name>
</gene>
<accession>C0NVM2</accession>
<protein>
    <recommendedName>
        <fullName>Leucine aminopeptidase 1</fullName>
        <ecNumber>3.4.11.-</ecNumber>
    </recommendedName>
    <alternativeName>
        <fullName>Leucyl aminopeptidase 1</fullName>
        <shortName>LAP1</shortName>
    </alternativeName>
</protein>
<name>LAP1_AJECG</name>
<comment type="function">
    <text evidence="1">Extracellular aminopeptidase that allows assimilation of proteinaceous substrates.</text>
</comment>
<comment type="cofactor">
    <cofactor evidence="1">
        <name>Zn(2+)</name>
        <dbReference type="ChEBI" id="CHEBI:29105"/>
    </cofactor>
    <text evidence="1">Binds 2 Zn(2+) ions per subunit.</text>
</comment>
<comment type="subunit">
    <text evidence="1">Monomer.</text>
</comment>
<comment type="subcellular location">
    <subcellularLocation>
        <location evidence="1">Secreted</location>
    </subcellularLocation>
</comment>
<comment type="similarity">
    <text evidence="3">Belongs to the peptidase M28 family. M28E subfamily.</text>
</comment>
<proteinExistence type="inferred from homology"/>
<dbReference type="EC" id="3.4.11.-"/>
<dbReference type="EMBL" id="GG663373">
    <property type="protein sequence ID" value="EEH04561.1"/>
    <property type="molecule type" value="Genomic_DNA"/>
</dbReference>
<dbReference type="SMR" id="C0NVM2"/>
<dbReference type="FunCoup" id="C0NVM2">
    <property type="interactions" value="26"/>
</dbReference>
<dbReference type="STRING" id="447093.C0NVM2"/>
<dbReference type="MEROPS" id="M28.022"/>
<dbReference type="GlyCosmos" id="C0NVM2">
    <property type="glycosylation" value="1 site, No reported glycans"/>
</dbReference>
<dbReference type="VEuPathDB" id="FungiDB:I7I50_09504"/>
<dbReference type="HOGENOM" id="CLU_025866_0_0_1"/>
<dbReference type="InParanoid" id="C0NVM2"/>
<dbReference type="Proteomes" id="UP000001631">
    <property type="component" value="Unassembled WGS sequence"/>
</dbReference>
<dbReference type="GO" id="GO:0005576">
    <property type="term" value="C:extracellular region"/>
    <property type="evidence" value="ECO:0007669"/>
    <property type="project" value="UniProtKB-SubCell"/>
</dbReference>
<dbReference type="GO" id="GO:0004177">
    <property type="term" value="F:aminopeptidase activity"/>
    <property type="evidence" value="ECO:0007669"/>
    <property type="project" value="UniProtKB-KW"/>
</dbReference>
<dbReference type="GO" id="GO:0046872">
    <property type="term" value="F:metal ion binding"/>
    <property type="evidence" value="ECO:0007669"/>
    <property type="project" value="UniProtKB-KW"/>
</dbReference>
<dbReference type="GO" id="GO:0008235">
    <property type="term" value="F:metalloexopeptidase activity"/>
    <property type="evidence" value="ECO:0007669"/>
    <property type="project" value="InterPro"/>
</dbReference>
<dbReference type="GO" id="GO:0006508">
    <property type="term" value="P:proteolysis"/>
    <property type="evidence" value="ECO:0007669"/>
    <property type="project" value="UniProtKB-KW"/>
</dbReference>
<dbReference type="CDD" id="cd03879">
    <property type="entry name" value="M28_AAP"/>
    <property type="match status" value="1"/>
</dbReference>
<dbReference type="FunFam" id="3.40.630.10:FF:000042">
    <property type="entry name" value="Peptide hydrolase"/>
    <property type="match status" value="1"/>
</dbReference>
<dbReference type="Gene3D" id="3.40.630.10">
    <property type="entry name" value="Zn peptidases"/>
    <property type="match status" value="1"/>
</dbReference>
<dbReference type="InterPro" id="IPR045175">
    <property type="entry name" value="M28_fam"/>
</dbReference>
<dbReference type="InterPro" id="IPR007484">
    <property type="entry name" value="Peptidase_M28"/>
</dbReference>
<dbReference type="PANTHER" id="PTHR12147:SF56">
    <property type="entry name" value="AMINOPEPTIDASE YDR415C-RELATED"/>
    <property type="match status" value="1"/>
</dbReference>
<dbReference type="PANTHER" id="PTHR12147">
    <property type="entry name" value="METALLOPEPTIDASE M28 FAMILY MEMBER"/>
    <property type="match status" value="1"/>
</dbReference>
<dbReference type="Pfam" id="PF04389">
    <property type="entry name" value="Peptidase_M28"/>
    <property type="match status" value="1"/>
</dbReference>
<dbReference type="SUPFAM" id="SSF53187">
    <property type="entry name" value="Zn-dependent exopeptidases"/>
    <property type="match status" value="1"/>
</dbReference>
<feature type="signal peptide" evidence="2">
    <location>
        <begin position="1"/>
        <end position="20"/>
    </location>
</feature>
<feature type="propeptide" id="PRO_0000412374" evidence="1">
    <location>
        <begin position="21"/>
        <end position="87"/>
    </location>
</feature>
<feature type="chain" id="PRO_0000412375" description="Leucine aminopeptidase 1">
    <location>
        <begin position="88"/>
        <end position="385"/>
    </location>
</feature>
<feature type="binding site" evidence="1">
    <location>
        <position position="185"/>
    </location>
    <ligand>
        <name>Zn(2+)</name>
        <dbReference type="ChEBI" id="CHEBI:29105"/>
        <label>1</label>
    </ligand>
</feature>
<feature type="binding site" evidence="1">
    <location>
        <position position="204"/>
    </location>
    <ligand>
        <name>Zn(2+)</name>
        <dbReference type="ChEBI" id="CHEBI:29105"/>
        <label>1</label>
    </ligand>
</feature>
<feature type="binding site" evidence="1">
    <location>
        <position position="204"/>
    </location>
    <ligand>
        <name>Zn(2+)</name>
        <dbReference type="ChEBI" id="CHEBI:29105"/>
        <label>2</label>
        <note>catalytic</note>
    </ligand>
</feature>
<feature type="binding site" evidence="1">
    <location>
        <position position="243"/>
    </location>
    <ligand>
        <name>Zn(2+)</name>
        <dbReference type="ChEBI" id="CHEBI:29105"/>
        <label>2</label>
        <note>catalytic</note>
    </ligand>
</feature>
<feature type="binding site" evidence="1">
    <location>
        <position position="270"/>
    </location>
    <ligand>
        <name>Zn(2+)</name>
        <dbReference type="ChEBI" id="CHEBI:29105"/>
        <label>1</label>
    </ligand>
</feature>
<feature type="binding site" evidence="1">
    <location>
        <position position="352"/>
    </location>
    <ligand>
        <name>Zn(2+)</name>
        <dbReference type="ChEBI" id="CHEBI:29105"/>
        <label>2</label>
        <note>catalytic</note>
    </ligand>
</feature>
<feature type="glycosylation site" description="N-linked (GlcNAc...) asparagine" evidence="2">
    <location>
        <position position="177"/>
    </location>
</feature>
<feature type="disulfide bond" evidence="1">
    <location>
        <begin position="319"/>
        <end position="323"/>
    </location>
</feature>
<sequence length="385" mass="42417">MKFPSLLSLGVAASTTIVAAVPDQKPIGDIIEDVHLGKFLIELGPGDTRWVTEEEKWGLRRDGRRFFDITAEAGQGVFPKTFAQTTVTFPTELQNVAHVKKLASSLSKNRLQTFLTKFTSFYTRYYKSESGRQSAIWLFEQIEKTIQESSATEARVEKFEHPWGQFSIIATIPGQTNKTVVVGAHQDSINLLMPSILPAPGADDDGSGTATILEALRVLLKSEAVTQGKAPNTVEFHWYSAEEAGLLGSQAVFAQYKQDNRDVKSMLQQDMTGYSKGTTNAGHADSVGIITDFVDEGLTNFIKKVVTGYCGISYVLTKCGYACSDHASASRYGYPSAFVIESKFEYSSKLIHSTRDEVSSLDFDHMLQHAKMTLGLVYELAFADL</sequence>